<comment type="function">
    <text evidence="1">Catalyzes the attachment of alanine to tRNA(Ala) in a two-step reaction: alanine is first activated by ATP to form Ala-AMP and then transferred to the acceptor end of tRNA(Ala). Also edits incorrectly charged Ser-tRNA(Ala) and Gly-tRNA(Ala) via its editing domain.</text>
</comment>
<comment type="catalytic activity">
    <reaction evidence="1">
        <text>tRNA(Ala) + L-alanine + ATP = L-alanyl-tRNA(Ala) + AMP + diphosphate</text>
        <dbReference type="Rhea" id="RHEA:12540"/>
        <dbReference type="Rhea" id="RHEA-COMP:9657"/>
        <dbReference type="Rhea" id="RHEA-COMP:9923"/>
        <dbReference type="ChEBI" id="CHEBI:30616"/>
        <dbReference type="ChEBI" id="CHEBI:33019"/>
        <dbReference type="ChEBI" id="CHEBI:57972"/>
        <dbReference type="ChEBI" id="CHEBI:78442"/>
        <dbReference type="ChEBI" id="CHEBI:78497"/>
        <dbReference type="ChEBI" id="CHEBI:456215"/>
        <dbReference type="EC" id="6.1.1.7"/>
    </reaction>
</comment>
<comment type="cofactor">
    <cofactor evidence="1">
        <name>Zn(2+)</name>
        <dbReference type="ChEBI" id="CHEBI:29105"/>
    </cofactor>
    <text evidence="1">Binds 1 zinc ion per subunit.</text>
</comment>
<comment type="subcellular location">
    <subcellularLocation>
        <location evidence="1">Cytoplasm</location>
    </subcellularLocation>
</comment>
<comment type="domain">
    <text evidence="1">Consists of three domains; the N-terminal catalytic domain, the editing domain and the C-terminal C-Ala domain. The editing domain removes incorrectly charged amino acids, while the C-Ala domain, along with tRNA(Ala), serves as a bridge to cooperatively bring together the editing and aminoacylation centers thus stimulating deacylation of misacylated tRNAs.</text>
</comment>
<comment type="similarity">
    <text evidence="1">Belongs to the class-II aminoacyl-tRNA synthetase family.</text>
</comment>
<proteinExistence type="inferred from homology"/>
<protein>
    <recommendedName>
        <fullName evidence="1">Alanine--tRNA ligase</fullName>
        <ecNumber evidence="1">6.1.1.7</ecNumber>
    </recommendedName>
    <alternativeName>
        <fullName evidence="1">Alanyl-tRNA synthetase</fullName>
        <shortName evidence="1">AlaRS</shortName>
    </alternativeName>
</protein>
<accession>A2ST90</accession>
<sequence>MLENEYQLEYFKENGFIRKICKKCGSAFWTLDPNREICGDAPCEPYQFIGNPIFTKHSLTEMREAYLSFFERHGHTRINRYPVAARWRDDIYLTIASIADFQPFVTSGVCPPPANPLTISQPCIRLNDLDNVGRSGRHFTCFEMMAHHAFNTDEKPIYWKDRCLELCSGFIESLGGNVFDLTYKENPWFGGGNAGPSVEVLMGGLEVATLVFMNLSRKNSGKPPVSIDGKDYYEMPLRIVDTGYGLERFTWASCGTPTAYDAVFPEMIPRILTAAGMEDRLENPEVERILGLNAKFAGLMDIRGEKIRDLRQQVADATNISVAKLEEIIVPMETVYALCDHTRCLAYMLGDLIVPSNVREGYLARLVLRRSIRMMQDLNMDDDLGDLVVSQMKTIGLANFEQDEDIVRHIINREVEKYDTTIERGTRTVQRVGQTYVKKNEPVPLAELITLYDSHGIPVDLMGKILKDTGAEFEIPDDFDSQIADMHSENETEKPVSPLAKYAERIAKIPETRKSFYERPADMEFDATVLDIFDNYVVLDATLFYPEGGGQPSDTGMLVTKSTMVRVDEVVKWENVILHKVRENTLKRGDRVKGVLDEDRRWALMRHHSATHMVLRAAKEVLGPHVHQAGSQLSTDVARLDIRHYTHITPEELKQMETIANRLVMENLPTMVKIENRVKAEQKFGFALYQGGVPPGKDIRVVQMGAEVQACAGTHCQSTGEIGPIKILKLEHIQDGVERIEFAAGFAALDAMQHIQSLLNTSADTLSVQTENLPGSVDRFFTEWKDQRKEIEKLRAKIAELELSRIEGINIGGVEVVIKQIDVSRKELVTVAGKIAERGGVTVLITTADGLGVVASSGTGKIHAGKLVGEVCAELGGKGGGKENLAQGAGADPSAVGKALLKAESFIRAEFNS</sequence>
<feature type="chain" id="PRO_1000074509" description="Alanine--tRNA ligase">
    <location>
        <begin position="1"/>
        <end position="913"/>
    </location>
</feature>
<feature type="binding site" evidence="1">
    <location>
        <position position="608"/>
    </location>
    <ligand>
        <name>Zn(2+)</name>
        <dbReference type="ChEBI" id="CHEBI:29105"/>
    </ligand>
</feature>
<feature type="binding site" evidence="1">
    <location>
        <position position="612"/>
    </location>
    <ligand>
        <name>Zn(2+)</name>
        <dbReference type="ChEBI" id="CHEBI:29105"/>
    </ligand>
</feature>
<feature type="binding site" evidence="1">
    <location>
        <position position="711"/>
    </location>
    <ligand>
        <name>Zn(2+)</name>
        <dbReference type="ChEBI" id="CHEBI:29105"/>
    </ligand>
</feature>
<feature type="binding site" evidence="1">
    <location>
        <position position="715"/>
    </location>
    <ligand>
        <name>Zn(2+)</name>
        <dbReference type="ChEBI" id="CHEBI:29105"/>
    </ligand>
</feature>
<gene>
    <name evidence="1" type="primary">alaS</name>
    <name type="ordered locus">Mlab_1380</name>
</gene>
<dbReference type="EC" id="6.1.1.7" evidence="1"/>
<dbReference type="EMBL" id="CP000559">
    <property type="protein sequence ID" value="ABN07546.1"/>
    <property type="molecule type" value="Genomic_DNA"/>
</dbReference>
<dbReference type="RefSeq" id="WP_011833749.1">
    <property type="nucleotide sequence ID" value="NC_008942.1"/>
</dbReference>
<dbReference type="SMR" id="A2ST90"/>
<dbReference type="STRING" id="410358.Mlab_1380"/>
<dbReference type="GeneID" id="4794418"/>
<dbReference type="KEGG" id="mla:Mlab_1380"/>
<dbReference type="eggNOG" id="arCOG01255">
    <property type="taxonomic scope" value="Archaea"/>
</dbReference>
<dbReference type="HOGENOM" id="CLU_004485_4_0_2"/>
<dbReference type="OrthoDB" id="7506at2157"/>
<dbReference type="Proteomes" id="UP000000365">
    <property type="component" value="Chromosome"/>
</dbReference>
<dbReference type="GO" id="GO:0005737">
    <property type="term" value="C:cytoplasm"/>
    <property type="evidence" value="ECO:0007669"/>
    <property type="project" value="UniProtKB-SubCell"/>
</dbReference>
<dbReference type="GO" id="GO:0004813">
    <property type="term" value="F:alanine-tRNA ligase activity"/>
    <property type="evidence" value="ECO:0007669"/>
    <property type="project" value="UniProtKB-UniRule"/>
</dbReference>
<dbReference type="GO" id="GO:0002161">
    <property type="term" value="F:aminoacyl-tRNA deacylase activity"/>
    <property type="evidence" value="ECO:0007669"/>
    <property type="project" value="TreeGrafter"/>
</dbReference>
<dbReference type="GO" id="GO:0005524">
    <property type="term" value="F:ATP binding"/>
    <property type="evidence" value="ECO:0007669"/>
    <property type="project" value="UniProtKB-UniRule"/>
</dbReference>
<dbReference type="GO" id="GO:0000049">
    <property type="term" value="F:tRNA binding"/>
    <property type="evidence" value="ECO:0007669"/>
    <property type="project" value="UniProtKB-KW"/>
</dbReference>
<dbReference type="GO" id="GO:0008270">
    <property type="term" value="F:zinc ion binding"/>
    <property type="evidence" value="ECO:0007669"/>
    <property type="project" value="UniProtKB-UniRule"/>
</dbReference>
<dbReference type="GO" id="GO:0006419">
    <property type="term" value="P:alanyl-tRNA aminoacylation"/>
    <property type="evidence" value="ECO:0007669"/>
    <property type="project" value="UniProtKB-UniRule"/>
</dbReference>
<dbReference type="FunFam" id="3.10.310.40:FF:000001">
    <property type="entry name" value="Alanine--tRNA ligase"/>
    <property type="match status" value="1"/>
</dbReference>
<dbReference type="FunFam" id="3.30.930.10:FF:000056">
    <property type="entry name" value="Alanine--tRNA ligase"/>
    <property type="match status" value="1"/>
</dbReference>
<dbReference type="FunFam" id="3.30.980.10:FF:000004">
    <property type="entry name" value="Alanine--tRNA ligase, cytoplasmic"/>
    <property type="match status" value="1"/>
</dbReference>
<dbReference type="Gene3D" id="2.40.30.130">
    <property type="match status" value="1"/>
</dbReference>
<dbReference type="Gene3D" id="3.10.310.40">
    <property type="match status" value="1"/>
</dbReference>
<dbReference type="Gene3D" id="3.30.54.20">
    <property type="match status" value="1"/>
</dbReference>
<dbReference type="Gene3D" id="6.10.250.550">
    <property type="match status" value="1"/>
</dbReference>
<dbReference type="Gene3D" id="3.30.930.10">
    <property type="entry name" value="Bira Bifunctional Protein, Domain 2"/>
    <property type="match status" value="1"/>
</dbReference>
<dbReference type="Gene3D" id="3.30.980.10">
    <property type="entry name" value="Threonyl-trna Synthetase, Chain A, domain 2"/>
    <property type="match status" value="1"/>
</dbReference>
<dbReference type="HAMAP" id="MF_00036_A">
    <property type="entry name" value="Ala_tRNA_synth_A"/>
    <property type="match status" value="1"/>
</dbReference>
<dbReference type="InterPro" id="IPR045864">
    <property type="entry name" value="aa-tRNA-synth_II/BPL/LPL"/>
</dbReference>
<dbReference type="InterPro" id="IPR002318">
    <property type="entry name" value="Ala-tRNA-lgiase_IIc"/>
</dbReference>
<dbReference type="InterPro" id="IPR018162">
    <property type="entry name" value="Ala-tRNA-ligase_IIc_anticod-bd"/>
</dbReference>
<dbReference type="InterPro" id="IPR018165">
    <property type="entry name" value="Ala-tRNA-synth_IIc_core"/>
</dbReference>
<dbReference type="InterPro" id="IPR018164">
    <property type="entry name" value="Ala-tRNA-synth_IIc_N"/>
</dbReference>
<dbReference type="InterPro" id="IPR022429">
    <property type="entry name" value="Ala-tRNA_lgiase_arc"/>
</dbReference>
<dbReference type="InterPro" id="IPR050058">
    <property type="entry name" value="Ala-tRNA_ligase"/>
</dbReference>
<dbReference type="InterPro" id="IPR003156">
    <property type="entry name" value="DHHA1_dom"/>
</dbReference>
<dbReference type="InterPro" id="IPR018163">
    <property type="entry name" value="Thr/Ala-tRNA-synth_IIc_edit"/>
</dbReference>
<dbReference type="InterPro" id="IPR009000">
    <property type="entry name" value="Transl_B-barrel_sf"/>
</dbReference>
<dbReference type="InterPro" id="IPR012947">
    <property type="entry name" value="tRNA_SAD"/>
</dbReference>
<dbReference type="NCBIfam" id="TIGR03683">
    <property type="entry name" value="A-tRNA_syn_arch"/>
    <property type="match status" value="1"/>
</dbReference>
<dbReference type="NCBIfam" id="TIGR00344">
    <property type="entry name" value="alaS"/>
    <property type="match status" value="1"/>
</dbReference>
<dbReference type="PANTHER" id="PTHR11777:SF9">
    <property type="entry name" value="ALANINE--TRNA LIGASE, CYTOPLASMIC"/>
    <property type="match status" value="1"/>
</dbReference>
<dbReference type="PANTHER" id="PTHR11777">
    <property type="entry name" value="ALANYL-TRNA SYNTHETASE"/>
    <property type="match status" value="1"/>
</dbReference>
<dbReference type="Pfam" id="PF02272">
    <property type="entry name" value="DHHA1"/>
    <property type="match status" value="1"/>
</dbReference>
<dbReference type="Pfam" id="PF01411">
    <property type="entry name" value="tRNA-synt_2c"/>
    <property type="match status" value="1"/>
</dbReference>
<dbReference type="Pfam" id="PF07973">
    <property type="entry name" value="tRNA_SAD"/>
    <property type="match status" value="1"/>
</dbReference>
<dbReference type="PRINTS" id="PR00980">
    <property type="entry name" value="TRNASYNTHALA"/>
</dbReference>
<dbReference type="SMART" id="SM00863">
    <property type="entry name" value="tRNA_SAD"/>
    <property type="match status" value="1"/>
</dbReference>
<dbReference type="SUPFAM" id="SSF55681">
    <property type="entry name" value="Class II aaRS and biotin synthetases"/>
    <property type="match status" value="1"/>
</dbReference>
<dbReference type="SUPFAM" id="SSF101353">
    <property type="entry name" value="Putative anticodon-binding domain of alanyl-tRNA synthetase (AlaRS)"/>
    <property type="match status" value="1"/>
</dbReference>
<dbReference type="SUPFAM" id="SSF55186">
    <property type="entry name" value="ThrRS/AlaRS common domain"/>
    <property type="match status" value="1"/>
</dbReference>
<dbReference type="SUPFAM" id="SSF50447">
    <property type="entry name" value="Translation proteins"/>
    <property type="match status" value="1"/>
</dbReference>
<dbReference type="PROSITE" id="PS50860">
    <property type="entry name" value="AA_TRNA_LIGASE_II_ALA"/>
    <property type="match status" value="1"/>
</dbReference>
<reference key="1">
    <citation type="journal article" date="2009" name="Stand. Genomic Sci.">
        <title>Complete genome sequence of Methanocorpusculum labreanum type strain Z.</title>
        <authorList>
            <person name="Anderson I.J."/>
            <person name="Sieprawska-Lupa M."/>
            <person name="Goltsman E."/>
            <person name="Lapidus A."/>
            <person name="Copeland A."/>
            <person name="Glavina Del Rio T."/>
            <person name="Tice H."/>
            <person name="Dalin E."/>
            <person name="Barry K."/>
            <person name="Pitluck S."/>
            <person name="Hauser L."/>
            <person name="Land M."/>
            <person name="Lucas S."/>
            <person name="Richardson P."/>
            <person name="Whitman W.B."/>
            <person name="Kyrpides N.C."/>
        </authorList>
    </citation>
    <scope>NUCLEOTIDE SEQUENCE [LARGE SCALE GENOMIC DNA]</scope>
    <source>
        <strain>ATCC 43576 / DSM 4855 / Z</strain>
    </source>
</reference>
<organism>
    <name type="scientific">Methanocorpusculum labreanum (strain ATCC 43576 / DSM 4855 / Z)</name>
    <dbReference type="NCBI Taxonomy" id="410358"/>
    <lineage>
        <taxon>Archaea</taxon>
        <taxon>Methanobacteriati</taxon>
        <taxon>Methanobacteriota</taxon>
        <taxon>Stenosarchaea group</taxon>
        <taxon>Methanomicrobia</taxon>
        <taxon>Methanomicrobiales</taxon>
        <taxon>Methanocorpusculaceae</taxon>
        <taxon>Methanocorpusculum</taxon>
    </lineage>
</organism>
<evidence type="ECO:0000255" key="1">
    <source>
        <dbReference type="HAMAP-Rule" id="MF_00036"/>
    </source>
</evidence>
<keyword id="KW-0030">Aminoacyl-tRNA synthetase</keyword>
<keyword id="KW-0067">ATP-binding</keyword>
<keyword id="KW-0963">Cytoplasm</keyword>
<keyword id="KW-0436">Ligase</keyword>
<keyword id="KW-0479">Metal-binding</keyword>
<keyword id="KW-0547">Nucleotide-binding</keyword>
<keyword id="KW-0648">Protein biosynthesis</keyword>
<keyword id="KW-1185">Reference proteome</keyword>
<keyword id="KW-0694">RNA-binding</keyword>
<keyword id="KW-0820">tRNA-binding</keyword>
<keyword id="KW-0862">Zinc</keyword>
<name>SYA_METLZ</name>